<dbReference type="EMBL" id="CP000384">
    <property type="protein sequence ID" value="ABG07925.1"/>
    <property type="molecule type" value="Genomic_DNA"/>
</dbReference>
<dbReference type="SMR" id="Q1BB09"/>
<dbReference type="KEGG" id="mmc:Mmcs_1816"/>
<dbReference type="HOGENOM" id="CLU_114845_0_0_11"/>
<dbReference type="BioCyc" id="MSP164756:G1G6O-1858-MONOMER"/>
<dbReference type="GO" id="GO:0010181">
    <property type="term" value="F:FMN binding"/>
    <property type="evidence" value="ECO:0007669"/>
    <property type="project" value="InterPro"/>
</dbReference>
<dbReference type="GO" id="GO:0036211">
    <property type="term" value="P:protein modification process"/>
    <property type="evidence" value="ECO:0007669"/>
    <property type="project" value="InterPro"/>
</dbReference>
<dbReference type="Gene3D" id="3.40.50.360">
    <property type="match status" value="1"/>
</dbReference>
<dbReference type="HAMAP" id="MF_00128">
    <property type="entry name" value="NrdI"/>
    <property type="match status" value="1"/>
</dbReference>
<dbReference type="InterPro" id="IPR029039">
    <property type="entry name" value="Flavoprotein-like_sf"/>
</dbReference>
<dbReference type="InterPro" id="IPR020852">
    <property type="entry name" value="RNR_Ib_NrdI_bac"/>
</dbReference>
<dbReference type="InterPro" id="IPR004465">
    <property type="entry name" value="RNR_NrdI"/>
</dbReference>
<dbReference type="NCBIfam" id="TIGR00333">
    <property type="entry name" value="nrdI"/>
    <property type="match status" value="1"/>
</dbReference>
<dbReference type="PANTHER" id="PTHR37297">
    <property type="entry name" value="PROTEIN NRDI"/>
    <property type="match status" value="1"/>
</dbReference>
<dbReference type="PANTHER" id="PTHR37297:SF1">
    <property type="entry name" value="PROTEIN NRDI"/>
    <property type="match status" value="1"/>
</dbReference>
<dbReference type="Pfam" id="PF07972">
    <property type="entry name" value="Flavodoxin_NdrI"/>
    <property type="match status" value="1"/>
</dbReference>
<dbReference type="PIRSF" id="PIRSF005087">
    <property type="entry name" value="NrdI"/>
    <property type="match status" value="1"/>
</dbReference>
<dbReference type="SUPFAM" id="SSF52218">
    <property type="entry name" value="Flavoproteins"/>
    <property type="match status" value="1"/>
</dbReference>
<accession>Q1BB09</accession>
<proteinExistence type="inferred from homology"/>
<reference key="1">
    <citation type="submission" date="2006-06" db="EMBL/GenBank/DDBJ databases">
        <title>Complete sequence of chromosome of Mycobacterium sp. MCS.</title>
        <authorList>
            <consortium name="US DOE Joint Genome Institute"/>
            <person name="Copeland A."/>
            <person name="Lucas S."/>
            <person name="Lapidus A."/>
            <person name="Barry K."/>
            <person name="Detter J.C."/>
            <person name="Glavina del Rio T."/>
            <person name="Hammon N."/>
            <person name="Israni S."/>
            <person name="Dalin E."/>
            <person name="Tice H."/>
            <person name="Pitluck S."/>
            <person name="Martinez M."/>
            <person name="Schmutz J."/>
            <person name="Larimer F."/>
            <person name="Land M."/>
            <person name="Hauser L."/>
            <person name="Kyrpides N."/>
            <person name="Kim E."/>
            <person name="Miller C.D."/>
            <person name="Hughes J.E."/>
            <person name="Anderson A.J."/>
            <person name="Sims R.C."/>
            <person name="Richardson P."/>
        </authorList>
    </citation>
    <scope>NUCLEOTIDE SEQUENCE [LARGE SCALE GENOMIC DNA]</scope>
    <source>
        <strain>MCS</strain>
    </source>
</reference>
<protein>
    <recommendedName>
        <fullName evidence="1">Protein NrdI</fullName>
    </recommendedName>
</protein>
<feature type="chain" id="PRO_1000016513" description="Protein NrdI">
    <location>
        <begin position="1"/>
        <end position="152"/>
    </location>
</feature>
<organism>
    <name type="scientific">Mycobacterium sp. (strain MCS)</name>
    <dbReference type="NCBI Taxonomy" id="164756"/>
    <lineage>
        <taxon>Bacteria</taxon>
        <taxon>Bacillati</taxon>
        <taxon>Actinomycetota</taxon>
        <taxon>Actinomycetes</taxon>
        <taxon>Mycobacteriales</taxon>
        <taxon>Mycobacteriaceae</taxon>
        <taxon>Mycobacterium</taxon>
    </lineage>
</organism>
<sequence length="152" mass="16755">MGNIVYFSSVSENTHRFVEKLELPATRIPILGRIQDPDFVREPYVLVLPTYGGGHANGPDPDAGGYVPKQVIAFLNNEHNRSLIRGVIAAGNTNFGAEFGYAGDVVSRKCGVPYLYRFELMGTTDDVLAVRAGLENFWKEQTCHPPSQLQSL</sequence>
<name>NRDI_MYCSS</name>
<comment type="function">
    <text evidence="1">Probably involved in ribonucleotide reductase function.</text>
</comment>
<comment type="similarity">
    <text evidence="1">Belongs to the NrdI family.</text>
</comment>
<evidence type="ECO:0000255" key="1">
    <source>
        <dbReference type="HAMAP-Rule" id="MF_00128"/>
    </source>
</evidence>
<gene>
    <name evidence="1" type="primary">nrdI</name>
    <name type="ordered locus">Mmcs_1816</name>
</gene>